<evidence type="ECO:0000255" key="1">
    <source>
        <dbReference type="HAMAP-Rule" id="MF_00044"/>
    </source>
</evidence>
<protein>
    <recommendedName>
        <fullName evidence="1">Aspartate--tRNA ligase</fullName>
        <ecNumber evidence="1">6.1.1.12</ecNumber>
    </recommendedName>
    <alternativeName>
        <fullName evidence="1">Aspartyl-tRNA synthetase</fullName>
        <shortName evidence="1">AspRS</shortName>
    </alternativeName>
</protein>
<dbReference type="EC" id="6.1.1.12" evidence="1"/>
<dbReference type="EMBL" id="BX571857">
    <property type="protein sequence ID" value="CAG43367.1"/>
    <property type="molecule type" value="Genomic_DNA"/>
</dbReference>
<dbReference type="RefSeq" id="WP_000044799.1">
    <property type="nucleotide sequence ID" value="NC_002953.3"/>
</dbReference>
<dbReference type="SMR" id="Q6G8T9"/>
<dbReference type="KEGG" id="sas:SAS1566"/>
<dbReference type="HOGENOM" id="CLU_014330_3_2_9"/>
<dbReference type="GO" id="GO:0005737">
    <property type="term" value="C:cytoplasm"/>
    <property type="evidence" value="ECO:0007669"/>
    <property type="project" value="UniProtKB-SubCell"/>
</dbReference>
<dbReference type="GO" id="GO:0004815">
    <property type="term" value="F:aspartate-tRNA ligase activity"/>
    <property type="evidence" value="ECO:0007669"/>
    <property type="project" value="UniProtKB-UniRule"/>
</dbReference>
<dbReference type="GO" id="GO:0005524">
    <property type="term" value="F:ATP binding"/>
    <property type="evidence" value="ECO:0007669"/>
    <property type="project" value="UniProtKB-UniRule"/>
</dbReference>
<dbReference type="GO" id="GO:0140096">
    <property type="term" value="F:catalytic activity, acting on a protein"/>
    <property type="evidence" value="ECO:0007669"/>
    <property type="project" value="UniProtKB-ARBA"/>
</dbReference>
<dbReference type="GO" id="GO:0003676">
    <property type="term" value="F:nucleic acid binding"/>
    <property type="evidence" value="ECO:0007669"/>
    <property type="project" value="InterPro"/>
</dbReference>
<dbReference type="GO" id="GO:0016740">
    <property type="term" value="F:transferase activity"/>
    <property type="evidence" value="ECO:0007669"/>
    <property type="project" value="UniProtKB-ARBA"/>
</dbReference>
<dbReference type="GO" id="GO:0006422">
    <property type="term" value="P:aspartyl-tRNA aminoacylation"/>
    <property type="evidence" value="ECO:0007669"/>
    <property type="project" value="UniProtKB-UniRule"/>
</dbReference>
<dbReference type="CDD" id="cd00777">
    <property type="entry name" value="AspRS_core"/>
    <property type="match status" value="1"/>
</dbReference>
<dbReference type="CDD" id="cd04317">
    <property type="entry name" value="EcAspRS_like_N"/>
    <property type="match status" value="1"/>
</dbReference>
<dbReference type="Gene3D" id="3.30.930.10">
    <property type="entry name" value="Bira Bifunctional Protein, Domain 2"/>
    <property type="match status" value="1"/>
</dbReference>
<dbReference type="Gene3D" id="3.30.1360.30">
    <property type="entry name" value="GAD-like domain"/>
    <property type="match status" value="1"/>
</dbReference>
<dbReference type="Gene3D" id="2.40.50.140">
    <property type="entry name" value="Nucleic acid-binding proteins"/>
    <property type="match status" value="1"/>
</dbReference>
<dbReference type="HAMAP" id="MF_00044">
    <property type="entry name" value="Asp_tRNA_synth_type1"/>
    <property type="match status" value="1"/>
</dbReference>
<dbReference type="InterPro" id="IPR004364">
    <property type="entry name" value="Aa-tRNA-synt_II"/>
</dbReference>
<dbReference type="InterPro" id="IPR006195">
    <property type="entry name" value="aa-tRNA-synth_II"/>
</dbReference>
<dbReference type="InterPro" id="IPR045864">
    <property type="entry name" value="aa-tRNA-synth_II/BPL/LPL"/>
</dbReference>
<dbReference type="InterPro" id="IPR004524">
    <property type="entry name" value="Asp-tRNA-ligase_1"/>
</dbReference>
<dbReference type="InterPro" id="IPR047089">
    <property type="entry name" value="Asp-tRNA-ligase_1_N"/>
</dbReference>
<dbReference type="InterPro" id="IPR002312">
    <property type="entry name" value="Asp/Asn-tRNA-synth_IIb"/>
</dbReference>
<dbReference type="InterPro" id="IPR047090">
    <property type="entry name" value="AspRS_core"/>
</dbReference>
<dbReference type="InterPro" id="IPR004115">
    <property type="entry name" value="GAD-like_sf"/>
</dbReference>
<dbReference type="InterPro" id="IPR029351">
    <property type="entry name" value="GAD_dom"/>
</dbReference>
<dbReference type="InterPro" id="IPR012340">
    <property type="entry name" value="NA-bd_OB-fold"/>
</dbReference>
<dbReference type="InterPro" id="IPR004365">
    <property type="entry name" value="NA-bd_OB_tRNA"/>
</dbReference>
<dbReference type="NCBIfam" id="TIGR00459">
    <property type="entry name" value="aspS_bact"/>
    <property type="match status" value="1"/>
</dbReference>
<dbReference type="NCBIfam" id="NF001750">
    <property type="entry name" value="PRK00476.1"/>
    <property type="match status" value="1"/>
</dbReference>
<dbReference type="PANTHER" id="PTHR22594:SF5">
    <property type="entry name" value="ASPARTATE--TRNA LIGASE, MITOCHONDRIAL"/>
    <property type="match status" value="1"/>
</dbReference>
<dbReference type="PANTHER" id="PTHR22594">
    <property type="entry name" value="ASPARTYL/LYSYL-TRNA SYNTHETASE"/>
    <property type="match status" value="1"/>
</dbReference>
<dbReference type="Pfam" id="PF02938">
    <property type="entry name" value="GAD"/>
    <property type="match status" value="1"/>
</dbReference>
<dbReference type="Pfam" id="PF00152">
    <property type="entry name" value="tRNA-synt_2"/>
    <property type="match status" value="1"/>
</dbReference>
<dbReference type="Pfam" id="PF01336">
    <property type="entry name" value="tRNA_anti-codon"/>
    <property type="match status" value="1"/>
</dbReference>
<dbReference type="PRINTS" id="PR01042">
    <property type="entry name" value="TRNASYNTHASP"/>
</dbReference>
<dbReference type="SUPFAM" id="SSF55681">
    <property type="entry name" value="Class II aaRS and biotin synthetases"/>
    <property type="match status" value="1"/>
</dbReference>
<dbReference type="SUPFAM" id="SSF55261">
    <property type="entry name" value="GAD domain-like"/>
    <property type="match status" value="1"/>
</dbReference>
<dbReference type="SUPFAM" id="SSF50249">
    <property type="entry name" value="Nucleic acid-binding proteins"/>
    <property type="match status" value="1"/>
</dbReference>
<dbReference type="PROSITE" id="PS50862">
    <property type="entry name" value="AA_TRNA_LIGASE_II"/>
    <property type="match status" value="1"/>
</dbReference>
<comment type="function">
    <text evidence="1">Catalyzes the attachment of L-aspartate to tRNA(Asp) in a two-step reaction: L-aspartate is first activated by ATP to form Asp-AMP and then transferred to the acceptor end of tRNA(Asp).</text>
</comment>
<comment type="catalytic activity">
    <reaction evidence="1">
        <text>tRNA(Asp) + L-aspartate + ATP = L-aspartyl-tRNA(Asp) + AMP + diphosphate</text>
        <dbReference type="Rhea" id="RHEA:19649"/>
        <dbReference type="Rhea" id="RHEA-COMP:9660"/>
        <dbReference type="Rhea" id="RHEA-COMP:9678"/>
        <dbReference type="ChEBI" id="CHEBI:29991"/>
        <dbReference type="ChEBI" id="CHEBI:30616"/>
        <dbReference type="ChEBI" id="CHEBI:33019"/>
        <dbReference type="ChEBI" id="CHEBI:78442"/>
        <dbReference type="ChEBI" id="CHEBI:78516"/>
        <dbReference type="ChEBI" id="CHEBI:456215"/>
        <dbReference type="EC" id="6.1.1.12"/>
    </reaction>
</comment>
<comment type="subunit">
    <text evidence="1">Homodimer.</text>
</comment>
<comment type="subcellular location">
    <subcellularLocation>
        <location evidence="1">Cytoplasm</location>
    </subcellularLocation>
</comment>
<comment type="similarity">
    <text evidence="1">Belongs to the class-II aminoacyl-tRNA synthetase family. Type 1 subfamily.</text>
</comment>
<gene>
    <name evidence="1" type="primary">aspS</name>
    <name type="ordered locus">SAS1566</name>
</gene>
<proteinExistence type="inferred from homology"/>
<accession>Q6G8T9</accession>
<keyword id="KW-0030">Aminoacyl-tRNA synthetase</keyword>
<keyword id="KW-0067">ATP-binding</keyword>
<keyword id="KW-0963">Cytoplasm</keyword>
<keyword id="KW-0436">Ligase</keyword>
<keyword id="KW-0547">Nucleotide-binding</keyword>
<keyword id="KW-0648">Protein biosynthesis</keyword>
<sequence length="588" mass="66599">MSKRTTYCGLVTEAFLGQEITLKGWVNNRRDLGGLIFVDLRDREGIVQVVFNPAFSEEALKIAETVRSEYVVEVQGTVTKRDPETVNPKIKTGQVEVQVTNIKVINKSETPPFSINEENVNVDENIRLKYRYLDLRRQELAQTFKMRHQITRSIRQYLDDEGFFDIETPVLTKSTPEGARDYLVPSRVHDGEFYALPQSPQLFKQLLMISGFDKYYQIVKCFRDEDLRADRQPEFTQVDIEMSFVDQEDVMQMGEEMLKKVVKEVKGVEINGAFPRMTYKEAMRRYGSDKPDTRFEMELIDVSQLGRDMDFKVFKDTVENDGEIKAIVAKGAAEQYTRKDMDALTEFVNIYGAKGLAWVKVVEDGLTGPIGRFFETENVETLLTLTGAEAGDLVMFVADKPNVVAQSLGALRVKLAKELGLIDETKLNFLWVTDWPLLEYDEDAKRYVAAHHPFTSPKEADIAKLGTAPEEAEANAYDIVLNGYELGGGSIRIHDGELQEKMFEVLGFTKEQAQEQFGFLLDAFKYGAPPHGGIALGLDRLVMLLTNRTNLRDTIAFPKTASATCLLTNAPGEVSDKQLEELSLRIRH</sequence>
<reference key="1">
    <citation type="journal article" date="2004" name="Proc. Natl. Acad. Sci. U.S.A.">
        <title>Complete genomes of two clinical Staphylococcus aureus strains: evidence for the rapid evolution of virulence and drug resistance.</title>
        <authorList>
            <person name="Holden M.T.G."/>
            <person name="Feil E.J."/>
            <person name="Lindsay J.A."/>
            <person name="Peacock S.J."/>
            <person name="Day N.P.J."/>
            <person name="Enright M.C."/>
            <person name="Foster T.J."/>
            <person name="Moore C.E."/>
            <person name="Hurst L."/>
            <person name="Atkin R."/>
            <person name="Barron A."/>
            <person name="Bason N."/>
            <person name="Bentley S.D."/>
            <person name="Chillingworth C."/>
            <person name="Chillingworth T."/>
            <person name="Churcher C."/>
            <person name="Clark L."/>
            <person name="Corton C."/>
            <person name="Cronin A."/>
            <person name="Doggett J."/>
            <person name="Dowd L."/>
            <person name="Feltwell T."/>
            <person name="Hance Z."/>
            <person name="Harris B."/>
            <person name="Hauser H."/>
            <person name="Holroyd S."/>
            <person name="Jagels K."/>
            <person name="James K.D."/>
            <person name="Lennard N."/>
            <person name="Line A."/>
            <person name="Mayes R."/>
            <person name="Moule S."/>
            <person name="Mungall K."/>
            <person name="Ormond D."/>
            <person name="Quail M.A."/>
            <person name="Rabbinowitsch E."/>
            <person name="Rutherford K.M."/>
            <person name="Sanders M."/>
            <person name="Sharp S."/>
            <person name="Simmonds M."/>
            <person name="Stevens K."/>
            <person name="Whitehead S."/>
            <person name="Barrell B.G."/>
            <person name="Spratt B.G."/>
            <person name="Parkhill J."/>
        </authorList>
    </citation>
    <scope>NUCLEOTIDE SEQUENCE [LARGE SCALE GENOMIC DNA]</scope>
    <source>
        <strain>MSSA476</strain>
    </source>
</reference>
<name>SYD_STAAS</name>
<feature type="chain" id="PRO_0000110945" description="Aspartate--tRNA ligase">
    <location>
        <begin position="1"/>
        <end position="588"/>
    </location>
</feature>
<feature type="region of interest" description="Aspartate" evidence="1">
    <location>
        <begin position="201"/>
        <end position="204"/>
    </location>
</feature>
<feature type="binding site" evidence="1">
    <location>
        <position position="177"/>
    </location>
    <ligand>
        <name>L-aspartate</name>
        <dbReference type="ChEBI" id="CHEBI:29991"/>
    </ligand>
</feature>
<feature type="binding site" evidence="1">
    <location>
        <begin position="223"/>
        <end position="225"/>
    </location>
    <ligand>
        <name>ATP</name>
        <dbReference type="ChEBI" id="CHEBI:30616"/>
    </ligand>
</feature>
<feature type="binding site" evidence="1">
    <location>
        <position position="223"/>
    </location>
    <ligand>
        <name>L-aspartate</name>
        <dbReference type="ChEBI" id="CHEBI:29991"/>
    </ligand>
</feature>
<feature type="binding site" evidence="1">
    <location>
        <position position="232"/>
    </location>
    <ligand>
        <name>ATP</name>
        <dbReference type="ChEBI" id="CHEBI:30616"/>
    </ligand>
</feature>
<feature type="binding site" evidence="1">
    <location>
        <position position="451"/>
    </location>
    <ligand>
        <name>L-aspartate</name>
        <dbReference type="ChEBI" id="CHEBI:29991"/>
    </ligand>
</feature>
<feature type="binding site" evidence="1">
    <location>
        <position position="485"/>
    </location>
    <ligand>
        <name>ATP</name>
        <dbReference type="ChEBI" id="CHEBI:30616"/>
    </ligand>
</feature>
<feature type="binding site" evidence="1">
    <location>
        <position position="492"/>
    </location>
    <ligand>
        <name>L-aspartate</name>
        <dbReference type="ChEBI" id="CHEBI:29991"/>
    </ligand>
</feature>
<feature type="binding site" evidence="1">
    <location>
        <begin position="537"/>
        <end position="540"/>
    </location>
    <ligand>
        <name>ATP</name>
        <dbReference type="ChEBI" id="CHEBI:30616"/>
    </ligand>
</feature>
<organism>
    <name type="scientific">Staphylococcus aureus (strain MSSA476)</name>
    <dbReference type="NCBI Taxonomy" id="282459"/>
    <lineage>
        <taxon>Bacteria</taxon>
        <taxon>Bacillati</taxon>
        <taxon>Bacillota</taxon>
        <taxon>Bacilli</taxon>
        <taxon>Bacillales</taxon>
        <taxon>Staphylococcaceae</taxon>
        <taxon>Staphylococcus</taxon>
    </lineage>
</organism>